<evidence type="ECO:0000250" key="1"/>
<evidence type="ECO:0000250" key="2">
    <source>
        <dbReference type="UniProtKB" id="P05407"/>
    </source>
</evidence>
<evidence type="ECO:0000255" key="3">
    <source>
        <dbReference type="PROSITE-ProRule" id="PRU00193"/>
    </source>
</evidence>
<evidence type="ECO:0000256" key="4">
    <source>
        <dbReference type="SAM" id="MobiDB-lite"/>
    </source>
</evidence>
<evidence type="ECO:0000305" key="5"/>
<keyword id="KW-0010">Activator</keyword>
<keyword id="KW-0067">ATP-binding</keyword>
<keyword id="KW-0238">DNA-binding</keyword>
<keyword id="KW-0479">Metal-binding</keyword>
<keyword id="KW-0535">Nitrogen fixation</keyword>
<keyword id="KW-0547">Nucleotide-binding</keyword>
<keyword id="KW-0614">Plasmid</keyword>
<keyword id="KW-1185">Reference proteome</keyword>
<keyword id="KW-0804">Transcription</keyword>
<keyword id="KW-0805">Transcription regulation</keyword>
<keyword id="KW-0902">Two-component regulatory system</keyword>
<comment type="function">
    <text>Required for activation of most nif operons, which are directly involved in nitrogen fixation.</text>
</comment>
<comment type="subunit">
    <text>Interacts with sigma-54.</text>
</comment>
<comment type="sequence caution" evidence="5">
    <conflict type="erroneous initiation">
        <sequence resource="EMBL-CDS" id="AAM54823"/>
    </conflict>
</comment>
<protein>
    <recommendedName>
        <fullName>Nif-specific regulatory protein</fullName>
    </recommendedName>
</protein>
<name>NIFA_RHIEC</name>
<organism>
    <name type="scientific">Rhizobium etli (strain ATCC 51251 / DSM 11541 / JCM 21823 / NBRC 15573 / CFN 42)</name>
    <dbReference type="NCBI Taxonomy" id="347834"/>
    <lineage>
        <taxon>Bacteria</taxon>
        <taxon>Pseudomonadati</taxon>
        <taxon>Pseudomonadota</taxon>
        <taxon>Alphaproteobacteria</taxon>
        <taxon>Hyphomicrobiales</taxon>
        <taxon>Rhizobiaceae</taxon>
        <taxon>Rhizobium/Agrobacterium group</taxon>
        <taxon>Rhizobium</taxon>
    </lineage>
</organism>
<dbReference type="EMBL" id="U31630">
    <property type="protein sequence ID" value="AAA84917.1"/>
    <property type="molecule type" value="Genomic_DNA"/>
</dbReference>
<dbReference type="EMBL" id="U80928">
    <property type="protein sequence ID" value="AAM54823.2"/>
    <property type="status" value="ALT_INIT"/>
    <property type="molecule type" value="Genomic_DNA"/>
</dbReference>
<dbReference type="SMR" id="P54931"/>
<dbReference type="KEGG" id="ret:RHE_PD00228"/>
<dbReference type="HOGENOM" id="CLU_000445_95_2_5"/>
<dbReference type="Proteomes" id="UP000001936">
    <property type="component" value="Plasmid p42d"/>
</dbReference>
<dbReference type="GO" id="GO:0005524">
    <property type="term" value="F:ATP binding"/>
    <property type="evidence" value="ECO:0007669"/>
    <property type="project" value="UniProtKB-KW"/>
</dbReference>
<dbReference type="GO" id="GO:0016887">
    <property type="term" value="F:ATP hydrolysis activity"/>
    <property type="evidence" value="ECO:0007669"/>
    <property type="project" value="InterPro"/>
</dbReference>
<dbReference type="GO" id="GO:0003700">
    <property type="term" value="F:DNA-binding transcription factor activity"/>
    <property type="evidence" value="ECO:0007669"/>
    <property type="project" value="InterPro"/>
</dbReference>
<dbReference type="GO" id="GO:0046872">
    <property type="term" value="F:metal ion binding"/>
    <property type="evidence" value="ECO:0007669"/>
    <property type="project" value="UniProtKB-KW"/>
</dbReference>
<dbReference type="GO" id="GO:0043565">
    <property type="term" value="F:sequence-specific DNA binding"/>
    <property type="evidence" value="ECO:0007669"/>
    <property type="project" value="InterPro"/>
</dbReference>
<dbReference type="GO" id="GO:0009399">
    <property type="term" value="P:nitrogen fixation"/>
    <property type="evidence" value="ECO:0007669"/>
    <property type="project" value="UniProtKB-KW"/>
</dbReference>
<dbReference type="GO" id="GO:0000160">
    <property type="term" value="P:phosphorelay signal transduction system"/>
    <property type="evidence" value="ECO:0007669"/>
    <property type="project" value="UniProtKB-KW"/>
</dbReference>
<dbReference type="CDD" id="cd00009">
    <property type="entry name" value="AAA"/>
    <property type="match status" value="1"/>
</dbReference>
<dbReference type="FunFam" id="3.40.50.300:FF:000006">
    <property type="entry name" value="DNA-binding transcriptional regulator NtrC"/>
    <property type="match status" value="1"/>
</dbReference>
<dbReference type="Gene3D" id="1.10.8.60">
    <property type="match status" value="1"/>
</dbReference>
<dbReference type="Gene3D" id="3.30.450.40">
    <property type="match status" value="1"/>
</dbReference>
<dbReference type="Gene3D" id="1.10.10.60">
    <property type="entry name" value="Homeodomain-like"/>
    <property type="match status" value="1"/>
</dbReference>
<dbReference type="Gene3D" id="3.40.50.300">
    <property type="entry name" value="P-loop containing nucleotide triphosphate hydrolases"/>
    <property type="match status" value="1"/>
</dbReference>
<dbReference type="InterPro" id="IPR003593">
    <property type="entry name" value="AAA+_ATPase"/>
</dbReference>
<dbReference type="InterPro" id="IPR003018">
    <property type="entry name" value="GAF"/>
</dbReference>
<dbReference type="InterPro" id="IPR029016">
    <property type="entry name" value="GAF-like_dom_sf"/>
</dbReference>
<dbReference type="InterPro" id="IPR002197">
    <property type="entry name" value="HTH_Fis"/>
</dbReference>
<dbReference type="InterPro" id="IPR010113">
    <property type="entry name" value="Nif-specific_regulatory_prot"/>
</dbReference>
<dbReference type="InterPro" id="IPR027417">
    <property type="entry name" value="P-loop_NTPase"/>
</dbReference>
<dbReference type="InterPro" id="IPR002078">
    <property type="entry name" value="Sigma_54_int"/>
</dbReference>
<dbReference type="InterPro" id="IPR025662">
    <property type="entry name" value="Sigma_54_int_dom_ATP-bd_1"/>
</dbReference>
<dbReference type="InterPro" id="IPR025943">
    <property type="entry name" value="Sigma_54_int_dom_ATP-bd_2"/>
</dbReference>
<dbReference type="InterPro" id="IPR025944">
    <property type="entry name" value="Sigma_54_int_dom_CS"/>
</dbReference>
<dbReference type="NCBIfam" id="TIGR01817">
    <property type="entry name" value="nifA"/>
    <property type="match status" value="1"/>
</dbReference>
<dbReference type="PANTHER" id="PTHR32071:SF117">
    <property type="entry name" value="PTS-DEPENDENT DIHYDROXYACETONE KINASE OPERON REGULATORY PROTEIN-RELATED"/>
    <property type="match status" value="1"/>
</dbReference>
<dbReference type="PANTHER" id="PTHR32071">
    <property type="entry name" value="TRANSCRIPTIONAL REGULATORY PROTEIN"/>
    <property type="match status" value="1"/>
</dbReference>
<dbReference type="Pfam" id="PF01590">
    <property type="entry name" value="GAF"/>
    <property type="match status" value="1"/>
</dbReference>
<dbReference type="Pfam" id="PF02954">
    <property type="entry name" value="HTH_8"/>
    <property type="match status" value="1"/>
</dbReference>
<dbReference type="Pfam" id="PF00158">
    <property type="entry name" value="Sigma54_activat"/>
    <property type="match status" value="1"/>
</dbReference>
<dbReference type="PRINTS" id="PR01590">
    <property type="entry name" value="HTHFIS"/>
</dbReference>
<dbReference type="SMART" id="SM00382">
    <property type="entry name" value="AAA"/>
    <property type="match status" value="1"/>
</dbReference>
<dbReference type="SMART" id="SM00065">
    <property type="entry name" value="GAF"/>
    <property type="match status" value="1"/>
</dbReference>
<dbReference type="SUPFAM" id="SSF55781">
    <property type="entry name" value="GAF domain-like"/>
    <property type="match status" value="1"/>
</dbReference>
<dbReference type="SUPFAM" id="SSF52540">
    <property type="entry name" value="P-loop containing nucleoside triphosphate hydrolases"/>
    <property type="match status" value="1"/>
</dbReference>
<dbReference type="PROSITE" id="PS00675">
    <property type="entry name" value="SIGMA54_INTERACT_1"/>
    <property type="match status" value="1"/>
</dbReference>
<dbReference type="PROSITE" id="PS00676">
    <property type="entry name" value="SIGMA54_INTERACT_2"/>
    <property type="match status" value="1"/>
</dbReference>
<dbReference type="PROSITE" id="PS00688">
    <property type="entry name" value="SIGMA54_INTERACT_3"/>
    <property type="match status" value="1"/>
</dbReference>
<dbReference type="PROSITE" id="PS50045">
    <property type="entry name" value="SIGMA54_INTERACT_4"/>
    <property type="match status" value="1"/>
</dbReference>
<feature type="chain" id="PRO_0000081310" description="Nif-specific regulatory protein">
    <location>
        <begin position="1"/>
        <end position="584"/>
    </location>
</feature>
<feature type="domain" description="GAF">
    <location>
        <begin position="45"/>
        <end position="187"/>
    </location>
</feature>
<feature type="domain" description="Sigma-54 factor interaction" evidence="3">
    <location>
        <begin position="229"/>
        <end position="457"/>
    </location>
</feature>
<feature type="DNA-binding region" description="H-T-H motif" evidence="1">
    <location>
        <begin position="556"/>
        <end position="575"/>
    </location>
</feature>
<feature type="region of interest" description="Disordered" evidence="4">
    <location>
        <begin position="1"/>
        <end position="24"/>
    </location>
</feature>
<feature type="region of interest" description="Inter-domain linker">
    <location>
        <begin position="458"/>
        <end position="541"/>
    </location>
</feature>
<feature type="region of interest" description="Disordered" evidence="4">
    <location>
        <begin position="495"/>
        <end position="518"/>
    </location>
</feature>
<feature type="region of interest" description="C-terminal DNA-binding domain">
    <location>
        <begin position="542"/>
        <end position="584"/>
    </location>
</feature>
<feature type="binding site" evidence="3">
    <location>
        <begin position="257"/>
        <end position="264"/>
    </location>
    <ligand>
        <name>ATP</name>
        <dbReference type="ChEBI" id="CHEBI:30616"/>
    </ligand>
</feature>
<feature type="binding site" evidence="3">
    <location>
        <begin position="320"/>
        <end position="329"/>
    </location>
    <ligand>
        <name>ATP</name>
        <dbReference type="ChEBI" id="CHEBI:30616"/>
    </ligand>
</feature>
<feature type="binding site" evidence="2">
    <location>
        <position position="471"/>
    </location>
    <ligand>
        <name>a divalent metal cation</name>
        <dbReference type="ChEBI" id="CHEBI:60240"/>
    </ligand>
</feature>
<feature type="binding site" evidence="2">
    <location>
        <position position="476"/>
    </location>
    <ligand>
        <name>a divalent metal cation</name>
        <dbReference type="ChEBI" id="CHEBI:60240"/>
    </ligand>
</feature>
<gene>
    <name type="primary">nifA</name>
    <name type="ordered locus">RHE_PD00228</name>
</gene>
<sequence length="584" mass="62898">MTHMPARPVDGAEPLSALPAGPMRQAGTQRSGIYEISKVLTAPARLEITLANVVNVLSSFLQIRCGAIVVLDAEGQPEIAATGDIPPSSQSAARGVIPKAVIDHIATTGMPLIVKDVSKSELFQAEPQPPWSSGTVPISFIGVPVKADNKILGTISIDRVRNDAAPFPADEDVRFLTMVANLVSRTIRLHRFLNLEGRRPIGEQERPEKPIIAQRGAPGRHPPVKIDGIIGDSPALQQVVETVSVVARTNSTVLLRGESGTGKEFFAQAIHELSPRKNKPFVKLNCAALPEGVLESELFGHEKGAFTGAIAQRAGRFELANGGTLLLDEIGEISPAFQAKLLRVLQEGELERVGGTKTLAVDVRLICATNKNLEMAVANAEFRADLYYRISVVPIVLPPLRERPGDIPRLANALLDRFNKENQRELTFSSSAIEVMSQCYFPGNVRELENCVRRTATLARSSSIVSSDFACKNSQCLSSLLWKTDGSPGGITVDGHARSNVMPTSSPRSGGSIGASDEVSSVKACDPHGSGCPAMESRLTQRDRLIEAMEKAGWVQAKAARILGLTPRQVGYALRQHRIEVKKL</sequence>
<accession>P54931</accession>
<accession>Q79BF1</accession>
<geneLocation type="plasmid">
    <name>sym p42d</name>
</geneLocation>
<proteinExistence type="predicted"/>
<reference key="1">
    <citation type="submission" date="1996-01" db="EMBL/GenBank/DDBJ databases">
        <title>Global transcriptional patterns in the symbiotic plasmid of Rhizobium etli CFN42.</title>
        <authorList>
            <person name="Girard L."/>
            <person name="Valderrama B."/>
            <person name="Palacios R."/>
            <person name="Romero D."/>
            <person name="Devila G."/>
        </authorList>
    </citation>
    <scope>NUCLEOTIDE SEQUENCE [GENOMIC DNA]</scope>
</reference>
<reference key="2">
    <citation type="journal article" date="2003" name="Genome Biol.">
        <title>The mosaic structure of the symbiotic plasmid of Rhizobium etli CFN42 and its relation to other symbiotic genome compartments.</title>
        <authorList>
            <person name="Gonzalez V."/>
            <person name="Bustos P."/>
            <person name="Ramirez-Romero M.A."/>
            <person name="Medrano-Soto A."/>
            <person name="Salgado H."/>
            <person name="Hernandez-Gonzalez I."/>
            <person name="Hernandez-Celis J.C."/>
            <person name="Quintero V."/>
            <person name="Moreno-Hagelsieb G."/>
            <person name="Girard L."/>
            <person name="Rodriguez O."/>
            <person name="Flores M."/>
            <person name="Cevallos M.A."/>
            <person name="Collado-Vides J."/>
            <person name="Romero D."/>
            <person name="Davila G."/>
        </authorList>
    </citation>
    <scope>NUCLEOTIDE SEQUENCE [LARGE SCALE GENOMIC DNA]</scope>
    <source>
        <strain>ATCC 51251 / DSM 11541 / JCM 21823 / NBRC 15573 / CFN 42</strain>
    </source>
</reference>
<reference key="3">
    <citation type="journal article" date="2006" name="Proc. Natl. Acad. Sci. U.S.A.">
        <title>The partitioned Rhizobium etli genome: genetic and metabolic redundancy in seven interacting replicons.</title>
        <authorList>
            <person name="Gonzalez V."/>
            <person name="Santamaria R.I."/>
            <person name="Bustos P."/>
            <person name="Hernandez-Gonzalez I."/>
            <person name="Medrano-Soto A."/>
            <person name="Moreno-Hagelsieb G."/>
            <person name="Janga S.C."/>
            <person name="Ramirez M.A."/>
            <person name="Jimenez-Jacinto V."/>
            <person name="Collado-Vides J."/>
            <person name="Davila G."/>
        </authorList>
    </citation>
    <scope>NUCLEOTIDE SEQUENCE [LARGE SCALE GENOMIC DNA]</scope>
    <source>
        <strain>ATCC 51251 / DSM 11541 / JCM 21823 / NBRC 15573 / CFN 42</strain>
    </source>
</reference>